<reference key="1">
    <citation type="journal article" date="2007" name="Mol. Biol. Evol.">
        <title>The complete chloroplast and mitochondrial DNA sequence of Ostreococcus tauri: organelle genomes of the smallest eukaryote are examples of compaction.</title>
        <authorList>
            <person name="Robbens S."/>
            <person name="Derelle E."/>
            <person name="Ferraz C."/>
            <person name="Wuyts J."/>
            <person name="Moreau H."/>
            <person name="Van de Peer Y."/>
        </authorList>
    </citation>
    <scope>NUCLEOTIDE SEQUENCE [LARGE SCALE GENOMIC DNA]</scope>
    <source>
        <strain>OTTH0595</strain>
    </source>
</reference>
<sequence length="100" mass="11709">MAKKALIARETKRQKLVQKYAAKRLEFKERIRTAESIREVVSIQREFQGLPRNSSKVRLKNRCAKTGRPKGYYRDFGLSRHVLREMAHQGLLPGVRKASW</sequence>
<dbReference type="EMBL" id="CR954199">
    <property type="protein sequence ID" value="CAL36373.1"/>
    <property type="molecule type" value="Genomic_DNA"/>
</dbReference>
<dbReference type="RefSeq" id="YP_717251.1">
    <property type="nucleotide sequence ID" value="NC_008289.1"/>
</dbReference>
<dbReference type="SMR" id="Q0P3K4"/>
<dbReference type="FunCoup" id="Q0P3K4">
    <property type="interactions" value="34"/>
</dbReference>
<dbReference type="STRING" id="70448.Q0P3K4"/>
<dbReference type="GeneID" id="4238803"/>
<dbReference type="KEGG" id="ota:OstapCp48"/>
<dbReference type="eggNOG" id="KOG1741">
    <property type="taxonomic scope" value="Eukaryota"/>
</dbReference>
<dbReference type="InParanoid" id="Q0P3K4"/>
<dbReference type="Proteomes" id="UP000009170">
    <property type="component" value="Chloroplast"/>
</dbReference>
<dbReference type="GO" id="GO:0009507">
    <property type="term" value="C:chloroplast"/>
    <property type="evidence" value="ECO:0007669"/>
    <property type="project" value="UniProtKB-SubCell"/>
</dbReference>
<dbReference type="GO" id="GO:0015935">
    <property type="term" value="C:small ribosomal subunit"/>
    <property type="evidence" value="ECO:0007669"/>
    <property type="project" value="TreeGrafter"/>
</dbReference>
<dbReference type="GO" id="GO:0019843">
    <property type="term" value="F:rRNA binding"/>
    <property type="evidence" value="ECO:0007669"/>
    <property type="project" value="UniProtKB-UniRule"/>
</dbReference>
<dbReference type="GO" id="GO:0003735">
    <property type="term" value="F:structural constituent of ribosome"/>
    <property type="evidence" value="ECO:0007669"/>
    <property type="project" value="InterPro"/>
</dbReference>
<dbReference type="GO" id="GO:0006412">
    <property type="term" value="P:translation"/>
    <property type="evidence" value="ECO:0007669"/>
    <property type="project" value="UniProtKB-UniRule"/>
</dbReference>
<dbReference type="FunFam" id="1.10.287.1480:FF:000001">
    <property type="entry name" value="30S ribosomal protein S14"/>
    <property type="match status" value="1"/>
</dbReference>
<dbReference type="Gene3D" id="1.10.287.1480">
    <property type="match status" value="1"/>
</dbReference>
<dbReference type="HAMAP" id="MF_00537">
    <property type="entry name" value="Ribosomal_uS14_1"/>
    <property type="match status" value="1"/>
</dbReference>
<dbReference type="InterPro" id="IPR001209">
    <property type="entry name" value="Ribosomal_uS14"/>
</dbReference>
<dbReference type="InterPro" id="IPR023036">
    <property type="entry name" value="Ribosomal_uS14_bac/plastid"/>
</dbReference>
<dbReference type="InterPro" id="IPR018271">
    <property type="entry name" value="Ribosomal_uS14_CS"/>
</dbReference>
<dbReference type="NCBIfam" id="NF006477">
    <property type="entry name" value="PRK08881.1"/>
    <property type="match status" value="1"/>
</dbReference>
<dbReference type="PANTHER" id="PTHR19836">
    <property type="entry name" value="30S RIBOSOMAL PROTEIN S14"/>
    <property type="match status" value="1"/>
</dbReference>
<dbReference type="PANTHER" id="PTHR19836:SF19">
    <property type="entry name" value="SMALL RIBOSOMAL SUBUNIT PROTEIN US14M"/>
    <property type="match status" value="1"/>
</dbReference>
<dbReference type="Pfam" id="PF00253">
    <property type="entry name" value="Ribosomal_S14"/>
    <property type="match status" value="1"/>
</dbReference>
<dbReference type="SUPFAM" id="SSF57716">
    <property type="entry name" value="Glucocorticoid receptor-like (DNA-binding domain)"/>
    <property type="match status" value="1"/>
</dbReference>
<dbReference type="PROSITE" id="PS00527">
    <property type="entry name" value="RIBOSOMAL_S14"/>
    <property type="match status" value="1"/>
</dbReference>
<evidence type="ECO:0000255" key="1">
    <source>
        <dbReference type="HAMAP-Rule" id="MF_00537"/>
    </source>
</evidence>
<evidence type="ECO:0000305" key="2"/>
<comment type="function">
    <text evidence="1">Binds 16S rRNA, required for the assembly of 30S particles.</text>
</comment>
<comment type="subunit">
    <text evidence="1">Part of the 30S ribosomal subunit.</text>
</comment>
<comment type="subcellular location">
    <subcellularLocation>
        <location>Plastid</location>
        <location>Chloroplast</location>
    </subcellularLocation>
</comment>
<comment type="similarity">
    <text evidence="1">Belongs to the universal ribosomal protein uS14 family.</text>
</comment>
<organism>
    <name type="scientific">Ostreococcus tauri</name>
    <dbReference type="NCBI Taxonomy" id="70448"/>
    <lineage>
        <taxon>Eukaryota</taxon>
        <taxon>Viridiplantae</taxon>
        <taxon>Chlorophyta</taxon>
        <taxon>Mamiellophyceae</taxon>
        <taxon>Mamiellales</taxon>
        <taxon>Bathycoccaceae</taxon>
        <taxon>Ostreococcus</taxon>
    </lineage>
</organism>
<geneLocation type="chloroplast"/>
<proteinExistence type="inferred from homology"/>
<name>RR14_OSTTA</name>
<protein>
    <recommendedName>
        <fullName evidence="1">Small ribosomal subunit protein uS14c</fullName>
    </recommendedName>
    <alternativeName>
        <fullName evidence="2">30S ribosomal protein S14, chloroplastic</fullName>
    </alternativeName>
</protein>
<feature type="chain" id="PRO_0000276692" description="Small ribosomal subunit protein uS14c">
    <location>
        <begin position="1"/>
        <end position="100"/>
    </location>
</feature>
<keyword id="KW-0150">Chloroplast</keyword>
<keyword id="KW-0934">Plastid</keyword>
<keyword id="KW-1185">Reference proteome</keyword>
<keyword id="KW-0687">Ribonucleoprotein</keyword>
<keyword id="KW-0689">Ribosomal protein</keyword>
<keyword id="KW-0694">RNA-binding</keyword>
<keyword id="KW-0699">rRNA-binding</keyword>
<gene>
    <name evidence="1" type="primary">rps14</name>
    <name type="ordered locus">OtCpg00480</name>
</gene>
<accession>Q0P3K4</accession>